<reference key="1">
    <citation type="journal article" date="2002" name="Nucleic Acids Res.">
        <title>Genome sequence of Shigella flexneri 2a: insights into pathogenicity through comparison with genomes of Escherichia coli K12 and O157.</title>
        <authorList>
            <person name="Jin Q."/>
            <person name="Yuan Z."/>
            <person name="Xu J."/>
            <person name="Wang Y."/>
            <person name="Shen Y."/>
            <person name="Lu W."/>
            <person name="Wang J."/>
            <person name="Liu H."/>
            <person name="Yang J."/>
            <person name="Yang F."/>
            <person name="Zhang X."/>
            <person name="Zhang J."/>
            <person name="Yang G."/>
            <person name="Wu H."/>
            <person name="Qu D."/>
            <person name="Dong J."/>
            <person name="Sun L."/>
            <person name="Xue Y."/>
            <person name="Zhao A."/>
            <person name="Gao Y."/>
            <person name="Zhu J."/>
            <person name="Kan B."/>
            <person name="Ding K."/>
            <person name="Chen S."/>
            <person name="Cheng H."/>
            <person name="Yao Z."/>
            <person name="He B."/>
            <person name="Chen R."/>
            <person name="Ma D."/>
            <person name="Qiang B."/>
            <person name="Wen Y."/>
            <person name="Hou Y."/>
            <person name="Yu J."/>
        </authorList>
    </citation>
    <scope>NUCLEOTIDE SEQUENCE [LARGE SCALE GENOMIC DNA]</scope>
    <source>
        <strain>301 / Serotype 2a</strain>
    </source>
</reference>
<reference key="2">
    <citation type="journal article" date="2003" name="Infect. Immun.">
        <title>Complete genome sequence and comparative genomics of Shigella flexneri serotype 2a strain 2457T.</title>
        <authorList>
            <person name="Wei J."/>
            <person name="Goldberg M.B."/>
            <person name="Burland V."/>
            <person name="Venkatesan M.M."/>
            <person name="Deng W."/>
            <person name="Fournier G."/>
            <person name="Mayhew G.F."/>
            <person name="Plunkett G. III"/>
            <person name="Rose D.J."/>
            <person name="Darling A."/>
            <person name="Mau B."/>
            <person name="Perna N.T."/>
            <person name="Payne S.M."/>
            <person name="Runyen-Janecky L.J."/>
            <person name="Zhou S."/>
            <person name="Schwartz D.C."/>
            <person name="Blattner F.R."/>
        </authorList>
    </citation>
    <scope>NUCLEOTIDE SEQUENCE [LARGE SCALE GENOMIC DNA]</scope>
    <source>
        <strain>ATCC 700930 / 2457T / Serotype 2a</strain>
    </source>
</reference>
<reference key="3">
    <citation type="journal article" date="1994" name="J. Bacteriol.">
        <title>Characterization of the rfc region of Shigella flexneri.</title>
        <authorList>
            <person name="Morona R."/>
            <person name="Mavris M."/>
            <person name="Fallarino A."/>
            <person name="Manning P.A."/>
        </authorList>
    </citation>
    <scope>NUCLEOTIDE SEQUENCE [GENOMIC DNA] OF 156-464</scope>
    <source>
        <strain>PE577 / Serotype 2a</strain>
    </source>
</reference>
<sequence length="464" mass="51191">MPFKTLSRRTFLTASSALAFLHTPFARALPARQSVNINDYNPHDWIASFKQAFSEGQTVVVPAGFVCDNINTGIFIPPGKTLHILGSLRGNGRGRFVLQDGSQVTGGEGGGMHNITLDVRGSDCTIKGLAMSGFGPVMQIYIGGKNKRVMRNLTIDNLTVSHANYAILRQGFHNQIIGANITNCKFSDLQGDAIEWNVAINDSDILISDHVIERINCTNGKINWGIGIGLAGSTYDNNYPEDQAVKNFVVANITGSDCRQLIHVENGKHFVIRNINARNITPDFSKKAGIDNATVAIYGCDNFVIDNIEMINSAGMLIGYGVIKGKYLSIPQNFRVNNIQLDNTHLAYKLRGIQISAGNAVSFVSLTNIEMKRASLELHNKPQHLFMRNINVMQESSVGPALSMNFDMRKDVRGVFMAKKETLLSLANVHAVNERGQSSVDIDRINHHIVNVEKINFRLPERRE</sequence>
<gene>
    <name type="primary">wcaM</name>
    <name type="ordered locus">SF2106</name>
    <name type="ordered locus">S2229</name>
</gene>
<accession>P37775</accession>
<organism>
    <name type="scientific">Shigella flexneri</name>
    <dbReference type="NCBI Taxonomy" id="623"/>
    <lineage>
        <taxon>Bacteria</taxon>
        <taxon>Pseudomonadati</taxon>
        <taxon>Pseudomonadota</taxon>
        <taxon>Gammaproteobacteria</taxon>
        <taxon>Enterobacterales</taxon>
        <taxon>Enterobacteriaceae</taxon>
        <taxon>Shigella</taxon>
    </lineage>
</organism>
<proteinExistence type="predicted"/>
<keyword id="KW-0448">Lipopolysaccharide biosynthesis</keyword>
<keyword id="KW-1185">Reference proteome</keyword>
<protein>
    <recommendedName>
        <fullName>Colanic acid biosynthesis protein WcaM</fullName>
    </recommendedName>
</protein>
<evidence type="ECO:0000305" key="1"/>
<comment type="pathway">
    <text>Slime biogenesis; slime polysaccharide biosynthesis.</text>
</comment>
<name>WCAM_SHIFL</name>
<feature type="chain" id="PRO_0000065960" description="Colanic acid biosynthesis protein WcaM">
    <location>
        <begin position="1"/>
        <end position="464"/>
    </location>
</feature>
<feature type="sequence conflict" description="In Ref. 3; CAA50765." evidence="1" ref="3">
    <original>E</original>
    <variation>D</variation>
    <location>
        <position position="395"/>
    </location>
</feature>
<feature type="sequence conflict" description="In Ref. 3; CAA50765." evidence="1" ref="3">
    <original>V</original>
    <variation>L</variation>
    <location>
        <position position="398"/>
    </location>
</feature>
<feature type="sequence conflict" description="In Ref. 3; CAA50765." evidence="1" ref="3">
    <original>INFRLPERRE</original>
    <variation>Y</variation>
    <location>
        <begin position="455"/>
        <end position="464"/>
    </location>
</feature>
<dbReference type="EMBL" id="AE005674">
    <property type="protein sequence ID" value="AAN43645.1"/>
    <property type="molecule type" value="Genomic_DNA"/>
</dbReference>
<dbReference type="EMBL" id="AE014073">
    <property type="protein sequence ID" value="AAP17474.1"/>
    <property type="molecule type" value="Genomic_DNA"/>
</dbReference>
<dbReference type="EMBL" id="X71970">
    <property type="protein sequence ID" value="CAA50765.1"/>
    <property type="molecule type" value="Genomic_DNA"/>
</dbReference>
<dbReference type="RefSeq" id="NP_707938.1">
    <property type="nucleotide sequence ID" value="NC_004337.2"/>
</dbReference>
<dbReference type="RefSeq" id="WP_001116126.1">
    <property type="nucleotide sequence ID" value="NZ_WPGW01000076.1"/>
</dbReference>
<dbReference type="SMR" id="P37775"/>
<dbReference type="STRING" id="198214.SF2106"/>
<dbReference type="PaxDb" id="198214-SF2106"/>
<dbReference type="GeneID" id="1025865"/>
<dbReference type="KEGG" id="sfl:SF2106"/>
<dbReference type="KEGG" id="sfx:S2229"/>
<dbReference type="PATRIC" id="fig|198214.7.peg.2514"/>
<dbReference type="HOGENOM" id="CLU_046699_0_0_6"/>
<dbReference type="UniPathway" id="UPA00936"/>
<dbReference type="Proteomes" id="UP000001006">
    <property type="component" value="Chromosome"/>
</dbReference>
<dbReference type="Proteomes" id="UP000002673">
    <property type="component" value="Chromosome"/>
</dbReference>
<dbReference type="GO" id="GO:0009103">
    <property type="term" value="P:lipopolysaccharide biosynthetic process"/>
    <property type="evidence" value="ECO:0007669"/>
    <property type="project" value="UniProtKB-KW"/>
</dbReference>
<dbReference type="GO" id="GO:0045228">
    <property type="term" value="P:slime layer polysaccharide biosynthetic process"/>
    <property type="evidence" value="ECO:0007669"/>
    <property type="project" value="UniProtKB-UniPathway"/>
</dbReference>
<dbReference type="Gene3D" id="2.160.20.10">
    <property type="entry name" value="Single-stranded right-handed beta-helix, Pectin lyase-like"/>
    <property type="match status" value="1"/>
</dbReference>
<dbReference type="InterPro" id="IPR023882">
    <property type="entry name" value="Colanic_acid_synth_WcaM"/>
</dbReference>
<dbReference type="InterPro" id="IPR012334">
    <property type="entry name" value="Pectin_lyas_fold"/>
</dbReference>
<dbReference type="InterPro" id="IPR011050">
    <property type="entry name" value="Pectin_lyase_fold/virulence"/>
</dbReference>
<dbReference type="NCBIfam" id="NF007517">
    <property type="entry name" value="PRK10123.1"/>
    <property type="match status" value="1"/>
</dbReference>
<dbReference type="NCBIfam" id="TIGR04004">
    <property type="entry name" value="WcaM"/>
    <property type="match status" value="1"/>
</dbReference>
<dbReference type="SUPFAM" id="SSF51126">
    <property type="entry name" value="Pectin lyase-like"/>
    <property type="match status" value="1"/>
</dbReference>